<sequence>MSKPIILTGDRPTGKLHLGHYVGSLKNRVLLQNENKYEMFVFLADQQALTDHAKESEIIKDSIANVALDYLSVGLDPEKVTIFIQSQIPELAELTMYYMNLVSLARLERNPTVKTEIAQKGFGESIPTGFLVYPISQAADITAFKANYVPVGNDQKPMIEQTREIVRSFNHTYKTNCLVEPEGIYPKNEAAGRLPGLDGNAKMSKSLGNGIFLSDDADTVRKKVMSMYTDPNHIRVEDPGQIEGNMVFHYLDIFGRKEDQTDIAAMKEHYQSGGLGDVKTKHYLLDILERELTPIRRRRLEYEKNMDQVLDILKKGSETARETASETLSGVKRAMGINYF</sequence>
<gene>
    <name evidence="1" type="primary">trpS</name>
    <name type="ordered locus">SMU_2158c</name>
</gene>
<organism>
    <name type="scientific">Streptococcus mutans serotype c (strain ATCC 700610 / UA159)</name>
    <dbReference type="NCBI Taxonomy" id="210007"/>
    <lineage>
        <taxon>Bacteria</taxon>
        <taxon>Bacillati</taxon>
        <taxon>Bacillota</taxon>
        <taxon>Bacilli</taxon>
        <taxon>Lactobacillales</taxon>
        <taxon>Streptococcaceae</taxon>
        <taxon>Streptococcus</taxon>
    </lineage>
</organism>
<name>SYW_STRMU</name>
<reference key="1">
    <citation type="journal article" date="2002" name="Proc. Natl. Acad. Sci. U.S.A.">
        <title>Genome sequence of Streptococcus mutans UA159, a cariogenic dental pathogen.</title>
        <authorList>
            <person name="Ajdic D.J."/>
            <person name="McShan W.M."/>
            <person name="McLaughlin R.E."/>
            <person name="Savic G."/>
            <person name="Chang J."/>
            <person name="Carson M.B."/>
            <person name="Primeaux C."/>
            <person name="Tian R."/>
            <person name="Kenton S."/>
            <person name="Jia H.G."/>
            <person name="Lin S.P."/>
            <person name="Qian Y."/>
            <person name="Li S."/>
            <person name="Zhu H."/>
            <person name="Najar F.Z."/>
            <person name="Lai H."/>
            <person name="White J."/>
            <person name="Roe B.A."/>
            <person name="Ferretti J.J."/>
        </authorList>
    </citation>
    <scope>NUCLEOTIDE SEQUENCE [LARGE SCALE GENOMIC DNA]</scope>
    <source>
        <strain>ATCC 700610 / UA159</strain>
    </source>
</reference>
<evidence type="ECO:0000255" key="1">
    <source>
        <dbReference type="HAMAP-Rule" id="MF_00140"/>
    </source>
</evidence>
<feature type="chain" id="PRO_0000136689" description="Tryptophan--tRNA ligase">
    <location>
        <begin position="1"/>
        <end position="340"/>
    </location>
</feature>
<feature type="short sequence motif" description="'HIGH' region" evidence="1">
    <location>
        <begin position="12"/>
        <end position="20"/>
    </location>
</feature>
<feature type="short sequence motif" description="'KMSKS' region" evidence="1">
    <location>
        <begin position="202"/>
        <end position="206"/>
    </location>
</feature>
<feature type="binding site" evidence="1">
    <location>
        <begin position="11"/>
        <end position="13"/>
    </location>
    <ligand>
        <name>ATP</name>
        <dbReference type="ChEBI" id="CHEBI:30616"/>
    </ligand>
</feature>
<feature type="binding site" evidence="1">
    <location>
        <begin position="19"/>
        <end position="20"/>
    </location>
    <ligand>
        <name>ATP</name>
        <dbReference type="ChEBI" id="CHEBI:30616"/>
    </ligand>
</feature>
<feature type="binding site" evidence="1">
    <location>
        <position position="140"/>
    </location>
    <ligand>
        <name>L-tryptophan</name>
        <dbReference type="ChEBI" id="CHEBI:57912"/>
    </ligand>
</feature>
<feature type="binding site" evidence="1">
    <location>
        <begin position="152"/>
        <end position="154"/>
    </location>
    <ligand>
        <name>ATP</name>
        <dbReference type="ChEBI" id="CHEBI:30616"/>
    </ligand>
</feature>
<feature type="binding site" evidence="1">
    <location>
        <position position="194"/>
    </location>
    <ligand>
        <name>ATP</name>
        <dbReference type="ChEBI" id="CHEBI:30616"/>
    </ligand>
</feature>
<feature type="binding site" evidence="1">
    <location>
        <begin position="202"/>
        <end position="206"/>
    </location>
    <ligand>
        <name>ATP</name>
        <dbReference type="ChEBI" id="CHEBI:30616"/>
    </ligand>
</feature>
<dbReference type="EC" id="6.1.1.2" evidence="1"/>
<dbReference type="EMBL" id="AE014133">
    <property type="protein sequence ID" value="AAN59747.1"/>
    <property type="molecule type" value="Genomic_DNA"/>
</dbReference>
<dbReference type="RefSeq" id="NP_722441.1">
    <property type="nucleotide sequence ID" value="NC_004350.2"/>
</dbReference>
<dbReference type="RefSeq" id="WP_002262458.1">
    <property type="nucleotide sequence ID" value="NC_004350.2"/>
</dbReference>
<dbReference type="SMR" id="Q8DRR1"/>
<dbReference type="STRING" id="210007.SMU_2158c"/>
<dbReference type="KEGG" id="smu:SMU_2158c"/>
<dbReference type="PATRIC" id="fig|210007.7.peg.1920"/>
<dbReference type="eggNOG" id="COG0180">
    <property type="taxonomic scope" value="Bacteria"/>
</dbReference>
<dbReference type="HOGENOM" id="CLU_029244_0_1_9"/>
<dbReference type="OrthoDB" id="9801042at2"/>
<dbReference type="PhylomeDB" id="Q8DRR1"/>
<dbReference type="Proteomes" id="UP000002512">
    <property type="component" value="Chromosome"/>
</dbReference>
<dbReference type="GO" id="GO:0005829">
    <property type="term" value="C:cytosol"/>
    <property type="evidence" value="ECO:0007669"/>
    <property type="project" value="TreeGrafter"/>
</dbReference>
<dbReference type="GO" id="GO:0005524">
    <property type="term" value="F:ATP binding"/>
    <property type="evidence" value="ECO:0007669"/>
    <property type="project" value="UniProtKB-UniRule"/>
</dbReference>
<dbReference type="GO" id="GO:0004830">
    <property type="term" value="F:tryptophan-tRNA ligase activity"/>
    <property type="evidence" value="ECO:0007669"/>
    <property type="project" value="UniProtKB-UniRule"/>
</dbReference>
<dbReference type="GO" id="GO:0006436">
    <property type="term" value="P:tryptophanyl-tRNA aminoacylation"/>
    <property type="evidence" value="ECO:0007669"/>
    <property type="project" value="UniProtKB-UniRule"/>
</dbReference>
<dbReference type="CDD" id="cd00806">
    <property type="entry name" value="TrpRS_core"/>
    <property type="match status" value="1"/>
</dbReference>
<dbReference type="FunFam" id="1.10.240.10:FF:000005">
    <property type="entry name" value="Tryptophan--tRNA ligase"/>
    <property type="match status" value="1"/>
</dbReference>
<dbReference type="FunFam" id="3.40.50.620:FF:000094">
    <property type="entry name" value="Tryptophan--tRNA ligase"/>
    <property type="match status" value="1"/>
</dbReference>
<dbReference type="Gene3D" id="3.40.50.620">
    <property type="entry name" value="HUPs"/>
    <property type="match status" value="1"/>
</dbReference>
<dbReference type="Gene3D" id="1.10.240.10">
    <property type="entry name" value="Tyrosyl-Transfer RNA Synthetase"/>
    <property type="match status" value="1"/>
</dbReference>
<dbReference type="HAMAP" id="MF_00140_B">
    <property type="entry name" value="Trp_tRNA_synth_B"/>
    <property type="match status" value="1"/>
</dbReference>
<dbReference type="InterPro" id="IPR001412">
    <property type="entry name" value="aa-tRNA-synth_I_CS"/>
</dbReference>
<dbReference type="InterPro" id="IPR002305">
    <property type="entry name" value="aa-tRNA-synth_Ic"/>
</dbReference>
<dbReference type="InterPro" id="IPR014729">
    <property type="entry name" value="Rossmann-like_a/b/a_fold"/>
</dbReference>
<dbReference type="InterPro" id="IPR002306">
    <property type="entry name" value="Trp-tRNA-ligase"/>
</dbReference>
<dbReference type="InterPro" id="IPR024109">
    <property type="entry name" value="Trp-tRNA-ligase_bac-type"/>
</dbReference>
<dbReference type="InterPro" id="IPR050203">
    <property type="entry name" value="Trp-tRNA_synthetase"/>
</dbReference>
<dbReference type="NCBIfam" id="TIGR00233">
    <property type="entry name" value="trpS"/>
    <property type="match status" value="1"/>
</dbReference>
<dbReference type="PANTHER" id="PTHR43766">
    <property type="entry name" value="TRYPTOPHAN--TRNA LIGASE, MITOCHONDRIAL"/>
    <property type="match status" value="1"/>
</dbReference>
<dbReference type="PANTHER" id="PTHR43766:SF1">
    <property type="entry name" value="TRYPTOPHAN--TRNA LIGASE, MITOCHONDRIAL"/>
    <property type="match status" value="1"/>
</dbReference>
<dbReference type="Pfam" id="PF00579">
    <property type="entry name" value="tRNA-synt_1b"/>
    <property type="match status" value="1"/>
</dbReference>
<dbReference type="PRINTS" id="PR01039">
    <property type="entry name" value="TRNASYNTHTRP"/>
</dbReference>
<dbReference type="SUPFAM" id="SSF52374">
    <property type="entry name" value="Nucleotidylyl transferase"/>
    <property type="match status" value="1"/>
</dbReference>
<dbReference type="PROSITE" id="PS00178">
    <property type="entry name" value="AA_TRNA_LIGASE_I"/>
    <property type="match status" value="1"/>
</dbReference>
<protein>
    <recommendedName>
        <fullName evidence="1">Tryptophan--tRNA ligase</fullName>
        <ecNumber evidence="1">6.1.1.2</ecNumber>
    </recommendedName>
    <alternativeName>
        <fullName evidence="1">Tryptophanyl-tRNA synthetase</fullName>
        <shortName evidence="1">TrpRS</shortName>
    </alternativeName>
</protein>
<comment type="function">
    <text evidence="1">Catalyzes the attachment of tryptophan to tRNA(Trp).</text>
</comment>
<comment type="catalytic activity">
    <reaction evidence="1">
        <text>tRNA(Trp) + L-tryptophan + ATP = L-tryptophyl-tRNA(Trp) + AMP + diphosphate + H(+)</text>
        <dbReference type="Rhea" id="RHEA:24080"/>
        <dbReference type="Rhea" id="RHEA-COMP:9671"/>
        <dbReference type="Rhea" id="RHEA-COMP:9705"/>
        <dbReference type="ChEBI" id="CHEBI:15378"/>
        <dbReference type="ChEBI" id="CHEBI:30616"/>
        <dbReference type="ChEBI" id="CHEBI:33019"/>
        <dbReference type="ChEBI" id="CHEBI:57912"/>
        <dbReference type="ChEBI" id="CHEBI:78442"/>
        <dbReference type="ChEBI" id="CHEBI:78535"/>
        <dbReference type="ChEBI" id="CHEBI:456215"/>
        <dbReference type="EC" id="6.1.1.2"/>
    </reaction>
</comment>
<comment type="subunit">
    <text evidence="1">Homodimer.</text>
</comment>
<comment type="subcellular location">
    <subcellularLocation>
        <location evidence="1">Cytoplasm</location>
    </subcellularLocation>
</comment>
<comment type="similarity">
    <text evidence="1">Belongs to the class-I aminoacyl-tRNA synthetase family.</text>
</comment>
<accession>Q8DRR1</accession>
<proteinExistence type="inferred from homology"/>
<keyword id="KW-0030">Aminoacyl-tRNA synthetase</keyword>
<keyword id="KW-0067">ATP-binding</keyword>
<keyword id="KW-0963">Cytoplasm</keyword>
<keyword id="KW-0436">Ligase</keyword>
<keyword id="KW-0547">Nucleotide-binding</keyword>
<keyword id="KW-0648">Protein biosynthesis</keyword>
<keyword id="KW-1185">Reference proteome</keyword>